<dbReference type="EC" id="2.7.7.6" evidence="1"/>
<dbReference type="EMBL" id="CP000551">
    <property type="protein sequence ID" value="ABM70970.1"/>
    <property type="molecule type" value="Genomic_DNA"/>
</dbReference>
<dbReference type="RefSeq" id="WP_011819098.1">
    <property type="nucleotide sequence ID" value="NC_008816.1"/>
</dbReference>
<dbReference type="SMR" id="A2BT59"/>
<dbReference type="STRING" id="146891.A9601_16871"/>
<dbReference type="KEGG" id="pmb:A9601_16871"/>
<dbReference type="eggNOG" id="COG0086">
    <property type="taxonomic scope" value="Bacteria"/>
</dbReference>
<dbReference type="HOGENOM" id="CLU_000524_1_0_3"/>
<dbReference type="OrthoDB" id="9815296at2"/>
<dbReference type="Proteomes" id="UP000002590">
    <property type="component" value="Chromosome"/>
</dbReference>
<dbReference type="GO" id="GO:0000428">
    <property type="term" value="C:DNA-directed RNA polymerase complex"/>
    <property type="evidence" value="ECO:0007669"/>
    <property type="project" value="UniProtKB-KW"/>
</dbReference>
<dbReference type="GO" id="GO:0003677">
    <property type="term" value="F:DNA binding"/>
    <property type="evidence" value="ECO:0007669"/>
    <property type="project" value="UniProtKB-UniRule"/>
</dbReference>
<dbReference type="GO" id="GO:0003899">
    <property type="term" value="F:DNA-directed RNA polymerase activity"/>
    <property type="evidence" value="ECO:0007669"/>
    <property type="project" value="UniProtKB-UniRule"/>
</dbReference>
<dbReference type="GO" id="GO:0008270">
    <property type="term" value="F:zinc ion binding"/>
    <property type="evidence" value="ECO:0007669"/>
    <property type="project" value="UniProtKB-UniRule"/>
</dbReference>
<dbReference type="GO" id="GO:0006351">
    <property type="term" value="P:DNA-templated transcription"/>
    <property type="evidence" value="ECO:0007669"/>
    <property type="project" value="UniProtKB-UniRule"/>
</dbReference>
<dbReference type="CDD" id="cd02655">
    <property type="entry name" value="RNAP_beta'_C"/>
    <property type="match status" value="1"/>
</dbReference>
<dbReference type="FunFam" id="1.10.150.390:FF:000002">
    <property type="entry name" value="DNA-directed RNA polymerase subunit beta"/>
    <property type="match status" value="1"/>
</dbReference>
<dbReference type="Gene3D" id="1.10.132.30">
    <property type="match status" value="1"/>
</dbReference>
<dbReference type="Gene3D" id="1.10.150.390">
    <property type="match status" value="1"/>
</dbReference>
<dbReference type="Gene3D" id="1.10.1790.20">
    <property type="match status" value="1"/>
</dbReference>
<dbReference type="Gene3D" id="2.40.50.100">
    <property type="match status" value="1"/>
</dbReference>
<dbReference type="Gene3D" id="1.10.274.100">
    <property type="entry name" value="RNA polymerase Rpb1, domain 3"/>
    <property type="match status" value="1"/>
</dbReference>
<dbReference type="HAMAP" id="MF_01324">
    <property type="entry name" value="RNApol_bact_RpoC2"/>
    <property type="match status" value="1"/>
</dbReference>
<dbReference type="InterPro" id="IPR012756">
    <property type="entry name" value="DNA-dir_RpoC2_beta_pp"/>
</dbReference>
<dbReference type="InterPro" id="IPR045867">
    <property type="entry name" value="DNA-dir_RpoC_beta_prime"/>
</dbReference>
<dbReference type="InterPro" id="IPR007066">
    <property type="entry name" value="RNA_pol_Rpb1_3"/>
</dbReference>
<dbReference type="InterPro" id="IPR042102">
    <property type="entry name" value="RNA_pol_Rpb1_3_sf"/>
</dbReference>
<dbReference type="InterPro" id="IPR007083">
    <property type="entry name" value="RNA_pol_Rpb1_4"/>
</dbReference>
<dbReference type="InterPro" id="IPR007081">
    <property type="entry name" value="RNA_pol_Rpb1_5"/>
</dbReference>
<dbReference type="InterPro" id="IPR038120">
    <property type="entry name" value="Rpb1_funnel_sf"/>
</dbReference>
<dbReference type="NCBIfam" id="NF002724">
    <property type="entry name" value="PRK02597.1"/>
    <property type="match status" value="1"/>
</dbReference>
<dbReference type="NCBIfam" id="TIGR02388">
    <property type="entry name" value="rpoC2_cyan"/>
    <property type="match status" value="1"/>
</dbReference>
<dbReference type="PANTHER" id="PTHR19376">
    <property type="entry name" value="DNA-DIRECTED RNA POLYMERASE"/>
    <property type="match status" value="1"/>
</dbReference>
<dbReference type="Pfam" id="PF04983">
    <property type="entry name" value="RNA_pol_Rpb1_3"/>
    <property type="match status" value="1"/>
</dbReference>
<dbReference type="Pfam" id="PF05000">
    <property type="entry name" value="RNA_pol_Rpb1_4"/>
    <property type="match status" value="1"/>
</dbReference>
<dbReference type="Pfam" id="PF04998">
    <property type="entry name" value="RNA_pol_Rpb1_5"/>
    <property type="match status" value="2"/>
</dbReference>
<dbReference type="SUPFAM" id="SSF64484">
    <property type="entry name" value="beta and beta-prime subunits of DNA dependent RNA-polymerase"/>
    <property type="match status" value="1"/>
</dbReference>
<protein>
    <recommendedName>
        <fullName evidence="1">DNA-directed RNA polymerase subunit beta'</fullName>
        <shortName evidence="1">RNAP subunit beta'</shortName>
        <ecNumber evidence="1">2.7.7.6</ecNumber>
    </recommendedName>
    <alternativeName>
        <fullName evidence="1">RNA polymerase subunit beta'</fullName>
    </alternativeName>
    <alternativeName>
        <fullName evidence="1">Transcriptase subunit beta'</fullName>
    </alternativeName>
</protein>
<organism>
    <name type="scientific">Prochlorococcus marinus (strain AS9601)</name>
    <dbReference type="NCBI Taxonomy" id="146891"/>
    <lineage>
        <taxon>Bacteria</taxon>
        <taxon>Bacillati</taxon>
        <taxon>Cyanobacteriota</taxon>
        <taxon>Cyanophyceae</taxon>
        <taxon>Synechococcales</taxon>
        <taxon>Prochlorococcaceae</taxon>
        <taxon>Prochlorococcus</taxon>
    </lineage>
</organism>
<accession>A2BT59</accession>
<keyword id="KW-0240">DNA-directed RNA polymerase</keyword>
<keyword id="KW-0479">Metal-binding</keyword>
<keyword id="KW-0548">Nucleotidyltransferase</keyword>
<keyword id="KW-0804">Transcription</keyword>
<keyword id="KW-0808">Transferase</keyword>
<keyword id="KW-0862">Zinc</keyword>
<sequence length="1366" mass="149650">MTSSKPKKTSRVRKTTKNSKKNNPVTMPALAKTPPSFKNKVVDKKALKNLVSWAYKTHGTAITAAMADNLKDLGFKYATQAAVSISVDDLKVPDAKQDLIGQAEEQISATEECYRLGEITEVERHTKVIDTWTETNERLVDAVKNNFNQNDPLNSVWMMANSGARGNMSQVRQLVGMRGLMANPQGEIIDLPIRTNFREGLTVTEYVISSYGARKGLVDTALRTADSGYLTRRLVDVAQDVIVREEDCGTERSIVVEAEDGKFGARLLGRLTAEDVLDAEENLLVPQNTAIDPALSGEIEKASINKVKIRSPLTCEANRSVCRRCYGWALAHNHLVDLGEAVGIIAAQSIGEPGTQLTMRTFHTGGVSTAESGVVRSKISGKVEFSSKAKIRGYRTPHGVEAKQAEVDFILKIVPQGNNSGKAQKIEVSSGSLLFVDDGEEINSDITVAQITAGAVKKSVEKATKDVICDLAGQVRYDKVIQPKEVTDRQGNITLKAQRLGRLWVLAGDVYNLPPNARPVISSGKSVDEGTVLAEASQSSEFGGQVRLRESIGDSREVQIVTTSMSLTNFKLIEESTHSGQIYNLESIDGISYRLNISPGSKISNGEVIADLTDERFRTKTGGLVKYAPGLSVKKARSSKNGFEVSQGGTLLWIPQETHEINKDISLLMIEDMKWIEAGTEVVKDIFSQTSGIVTVTQKNDILREITIRNGTFHECDDEEVLNRFTEEGNLVNPGEKILDGVDNKEILFVQKLETPKCRGLLLRTVEEFTIPDQAELPQLAHVKQEKGPYLGLKAIQRLTYKDGELIKSVEGVELLRTHLSIESFDATPQMTIDVESIEDKNDSSINRLNLVILESILVRRDTISDSSHGSTHTELQVNDNQLVKAGDVISTTQILCKEKGLVQLPNVVDDEPIRRLIVERQEDKIKIKISDKALVKVGDRVVDGDPISKSIKSTFCGEIEEVSNSSVTLRYGRPYMVSPDSVLHVKDGDLVLRGDGLALLVFERQKTGDIVQGLPRIEELLEARRPRDAAILCKKSGIVQIKQGNDEESVSLSVIEKDDLVNEYQLLVGKNLMVSDGQQVAGGEPLTDGPLNPHELLDCYFNDLKDQKPLLDAARESISKLQRSMVSEVQNVYKSQGVAIDDKHIEVIVRQMTSKVRIEDAGDTTLLPGELIELRQVEDTNQAMAITGGAPAEFTPVLLGITKASLNTDSFISAASFQETTRVLTEAAIEGKSDWLRGLKENVIIGRLIPAGTGFSGFVEELSSEAGPHPDILAEESGGYRRAQNLRPDYTVDMPQSPAVSSSAILDDPSDEDLETTRNRHGIDPSSSNFAAFARPNAENQFSEDQLPDPAALEGLQEEGLLSDE</sequence>
<proteinExistence type="inferred from homology"/>
<gene>
    <name evidence="1" type="primary">rpoC2</name>
    <name type="ordered locus">A9601_16871</name>
</gene>
<reference key="1">
    <citation type="journal article" date="2007" name="PLoS Genet.">
        <title>Patterns and implications of gene gain and loss in the evolution of Prochlorococcus.</title>
        <authorList>
            <person name="Kettler G.C."/>
            <person name="Martiny A.C."/>
            <person name="Huang K."/>
            <person name="Zucker J."/>
            <person name="Coleman M.L."/>
            <person name="Rodrigue S."/>
            <person name="Chen F."/>
            <person name="Lapidus A."/>
            <person name="Ferriera S."/>
            <person name="Johnson J."/>
            <person name="Steglich C."/>
            <person name="Church G.M."/>
            <person name="Richardson P."/>
            <person name="Chisholm S.W."/>
        </authorList>
    </citation>
    <scope>NUCLEOTIDE SEQUENCE [LARGE SCALE GENOMIC DNA]</scope>
    <source>
        <strain>AS9601</strain>
    </source>
</reference>
<feature type="chain" id="PRO_0000353524" description="DNA-directed RNA polymerase subunit beta'">
    <location>
        <begin position="1"/>
        <end position="1366"/>
    </location>
</feature>
<feature type="region of interest" description="Disordered" evidence="2">
    <location>
        <begin position="1"/>
        <end position="33"/>
    </location>
</feature>
<feature type="region of interest" description="Disordered" evidence="2">
    <location>
        <begin position="1291"/>
        <end position="1366"/>
    </location>
</feature>
<feature type="compositionally biased region" description="Basic residues" evidence="2">
    <location>
        <begin position="1"/>
        <end position="20"/>
    </location>
</feature>
<feature type="compositionally biased region" description="Low complexity" evidence="2">
    <location>
        <begin position="1354"/>
        <end position="1366"/>
    </location>
</feature>
<feature type="binding site" evidence="1">
    <location>
        <position position="248"/>
    </location>
    <ligand>
        <name>Zn(2+)</name>
        <dbReference type="ChEBI" id="CHEBI:29105"/>
    </ligand>
</feature>
<feature type="binding site" evidence="1">
    <location>
        <position position="315"/>
    </location>
    <ligand>
        <name>Zn(2+)</name>
        <dbReference type="ChEBI" id="CHEBI:29105"/>
    </ligand>
</feature>
<feature type="binding site" evidence="1">
    <location>
        <position position="322"/>
    </location>
    <ligand>
        <name>Zn(2+)</name>
        <dbReference type="ChEBI" id="CHEBI:29105"/>
    </ligand>
</feature>
<feature type="binding site" evidence="1">
    <location>
        <position position="325"/>
    </location>
    <ligand>
        <name>Zn(2+)</name>
        <dbReference type="ChEBI" id="CHEBI:29105"/>
    </ligand>
</feature>
<evidence type="ECO:0000255" key="1">
    <source>
        <dbReference type="HAMAP-Rule" id="MF_01324"/>
    </source>
</evidence>
<evidence type="ECO:0000256" key="2">
    <source>
        <dbReference type="SAM" id="MobiDB-lite"/>
    </source>
</evidence>
<comment type="function">
    <text evidence="1">DNA-dependent RNA polymerase catalyzes the transcription of DNA into RNA using the four ribonucleoside triphosphates as substrates.</text>
</comment>
<comment type="catalytic activity">
    <reaction evidence="1">
        <text>RNA(n) + a ribonucleoside 5'-triphosphate = RNA(n+1) + diphosphate</text>
        <dbReference type="Rhea" id="RHEA:21248"/>
        <dbReference type="Rhea" id="RHEA-COMP:14527"/>
        <dbReference type="Rhea" id="RHEA-COMP:17342"/>
        <dbReference type="ChEBI" id="CHEBI:33019"/>
        <dbReference type="ChEBI" id="CHEBI:61557"/>
        <dbReference type="ChEBI" id="CHEBI:140395"/>
        <dbReference type="EC" id="2.7.7.6"/>
    </reaction>
</comment>
<comment type="cofactor">
    <cofactor evidence="1">
        <name>Zn(2+)</name>
        <dbReference type="ChEBI" id="CHEBI:29105"/>
    </cofactor>
    <text evidence="1">Binds 1 Zn(2+) ion per subunit.</text>
</comment>
<comment type="subunit">
    <text evidence="1">In cyanobacteria the RNAP catalytic core is composed of 2 alpha, 1 beta, 1 beta', 1 gamma and 1 omega subunit. When a sigma factor is associated with the core the holoenzyme is formed, which can initiate transcription.</text>
</comment>
<comment type="similarity">
    <text evidence="1">Belongs to the RNA polymerase beta' chain family. RpoC2 subfamily.</text>
</comment>
<name>RPOC2_PROMS</name>